<accession>Q750Y3</accession>
<protein>
    <recommendedName>
        <fullName>Defective in cullin neddylation protein 1</fullName>
    </recommendedName>
</protein>
<feature type="chain" id="PRO_0000129509" description="Defective in cullin neddylation protein 1">
    <location>
        <begin position="1"/>
        <end position="255"/>
    </location>
</feature>
<feature type="domain" description="UBA-like">
    <location>
        <begin position="6"/>
        <end position="43"/>
    </location>
</feature>
<feature type="domain" description="DCUN1" evidence="2">
    <location>
        <begin position="54"/>
        <end position="250"/>
    </location>
</feature>
<name>DCN1_EREGS</name>
<keyword id="KW-1185">Reference proteome</keyword>
<keyword id="KW-0833">Ubl conjugation pathway</keyword>
<proteinExistence type="inferred from homology"/>
<gene>
    <name type="primary">DCN1</name>
    <name type="ordered locus">AGL194C</name>
</gene>
<comment type="function">
    <text evidence="1">May contribute to neddylation of cullin components of SCF-type E3 ubiquitin ligase complexes. Neddylation of cullins play an essential role in the regulation of SCF-type complexes activity (By similarity).</text>
</comment>
<reference key="1">
    <citation type="journal article" date="2004" name="Science">
        <title>The Ashbya gossypii genome as a tool for mapping the ancient Saccharomyces cerevisiae genome.</title>
        <authorList>
            <person name="Dietrich F.S."/>
            <person name="Voegeli S."/>
            <person name="Brachat S."/>
            <person name="Lerch A."/>
            <person name="Gates K."/>
            <person name="Steiner S."/>
            <person name="Mohr C."/>
            <person name="Poehlmann R."/>
            <person name="Luedi P."/>
            <person name="Choi S."/>
            <person name="Wing R.A."/>
            <person name="Flavier A."/>
            <person name="Gaffney T.D."/>
            <person name="Philippsen P."/>
        </authorList>
    </citation>
    <scope>NUCLEOTIDE SEQUENCE [LARGE SCALE GENOMIC DNA]</scope>
    <source>
        <strain>ATCC 10895 / CBS 109.51 / FGSC 9923 / NRRL Y-1056</strain>
    </source>
</reference>
<reference key="2">
    <citation type="journal article" date="2013" name="G3 (Bethesda)">
        <title>Genomes of Ashbya fungi isolated from insects reveal four mating-type loci, numerous translocations, lack of transposons, and distinct gene duplications.</title>
        <authorList>
            <person name="Dietrich F.S."/>
            <person name="Voegeli S."/>
            <person name="Kuo S."/>
            <person name="Philippsen P."/>
        </authorList>
    </citation>
    <scope>GENOME REANNOTATION</scope>
    <scope>SEQUENCE REVISION TO N-TERMINUS</scope>
    <source>
        <strain>ATCC 10895 / CBS 109.51 / FGSC 9923 / NRRL Y-1056</strain>
    </source>
</reference>
<organism>
    <name type="scientific">Eremothecium gossypii (strain ATCC 10895 / CBS 109.51 / FGSC 9923 / NRRL Y-1056)</name>
    <name type="common">Yeast</name>
    <name type="synonym">Ashbya gossypii</name>
    <dbReference type="NCBI Taxonomy" id="284811"/>
    <lineage>
        <taxon>Eukaryota</taxon>
        <taxon>Fungi</taxon>
        <taxon>Dikarya</taxon>
        <taxon>Ascomycota</taxon>
        <taxon>Saccharomycotina</taxon>
        <taxon>Saccharomycetes</taxon>
        <taxon>Saccharomycetales</taxon>
        <taxon>Saccharomycetaceae</taxon>
        <taxon>Eremothecium</taxon>
    </lineage>
</organism>
<sequence>MSNARQRELIREFLAVTSATSAAAETYLERNHWSLDHALDDFYTQSGGGGRAEQYSAELVATFERYAAGGAMDTEALVRYVGDLGFQLEDVATLCLARLLKVEELTADISRFQFLSTWHGLGCSSLPDMRAAVDALELRLRTDAAYFRALYAYTFGLGLDAGGRRLSVETAIAYWSLFFLDHTYAVTVPAPRLRSWFEFLRAGDHSVSRDTWDMFPRFAQRFPDDTELLEHYNELASWPLVIDEYYEWVKGRNQL</sequence>
<evidence type="ECO:0000250" key="1"/>
<evidence type="ECO:0000255" key="2">
    <source>
        <dbReference type="PROSITE-ProRule" id="PRU00574"/>
    </source>
</evidence>
<dbReference type="EMBL" id="AE016820">
    <property type="protein sequence ID" value="AAS54297.2"/>
    <property type="molecule type" value="Genomic_DNA"/>
</dbReference>
<dbReference type="RefSeq" id="NP_986473.2">
    <property type="nucleotide sequence ID" value="NM_211535.2"/>
</dbReference>
<dbReference type="SMR" id="Q750Y3"/>
<dbReference type="FunCoup" id="Q750Y3">
    <property type="interactions" value="437"/>
</dbReference>
<dbReference type="STRING" id="284811.Q750Y3"/>
<dbReference type="EnsemblFungi" id="AAS54297">
    <property type="protein sequence ID" value="AAS54297"/>
    <property type="gene ID" value="AGOS_AGL194C"/>
</dbReference>
<dbReference type="GeneID" id="4622766"/>
<dbReference type="KEGG" id="ago:AGOS_AGL194C"/>
<dbReference type="eggNOG" id="KOG3077">
    <property type="taxonomic scope" value="Eukaryota"/>
</dbReference>
<dbReference type="HOGENOM" id="CLU_047042_0_0_1"/>
<dbReference type="InParanoid" id="Q750Y3"/>
<dbReference type="OMA" id="LWCKFLQ"/>
<dbReference type="OrthoDB" id="27198at2759"/>
<dbReference type="Proteomes" id="UP000000591">
    <property type="component" value="Chromosome VII"/>
</dbReference>
<dbReference type="GO" id="GO:0000151">
    <property type="term" value="C:ubiquitin ligase complex"/>
    <property type="evidence" value="ECO:0000318"/>
    <property type="project" value="GO_Central"/>
</dbReference>
<dbReference type="GO" id="GO:0097602">
    <property type="term" value="F:cullin family protein binding"/>
    <property type="evidence" value="ECO:0000318"/>
    <property type="project" value="GO_Central"/>
</dbReference>
<dbReference type="GO" id="GO:0030674">
    <property type="term" value="F:protein-macromolecule adaptor activity"/>
    <property type="evidence" value="ECO:0007669"/>
    <property type="project" value="EnsemblFungi"/>
</dbReference>
<dbReference type="GO" id="GO:0031624">
    <property type="term" value="F:ubiquitin conjugating enzyme binding"/>
    <property type="evidence" value="ECO:0000318"/>
    <property type="project" value="GO_Central"/>
</dbReference>
<dbReference type="GO" id="GO:0032182">
    <property type="term" value="F:ubiquitin-like protein binding"/>
    <property type="evidence" value="ECO:0000318"/>
    <property type="project" value="GO_Central"/>
</dbReference>
<dbReference type="GO" id="GO:0045116">
    <property type="term" value="P:protein neddylation"/>
    <property type="evidence" value="ECO:0000318"/>
    <property type="project" value="GO_Central"/>
</dbReference>
<dbReference type="CDD" id="cd14352">
    <property type="entry name" value="UBA_DCN1"/>
    <property type="match status" value="1"/>
</dbReference>
<dbReference type="Gene3D" id="1.10.238.200">
    <property type="entry name" value="Cullin, PONY binding domain"/>
    <property type="match status" value="1"/>
</dbReference>
<dbReference type="Gene3D" id="1.10.8.10">
    <property type="entry name" value="DNA helicase RuvA subunit, C-terminal domain"/>
    <property type="match status" value="1"/>
</dbReference>
<dbReference type="Gene3D" id="1.10.238.10">
    <property type="entry name" value="EF-hand"/>
    <property type="match status" value="1"/>
</dbReference>
<dbReference type="InterPro" id="IPR014764">
    <property type="entry name" value="DCN-prot"/>
</dbReference>
<dbReference type="InterPro" id="IPR042460">
    <property type="entry name" value="DCN1-like_PONY"/>
</dbReference>
<dbReference type="InterPro" id="IPR005176">
    <property type="entry name" value="PONY_dom"/>
</dbReference>
<dbReference type="InterPro" id="IPR009060">
    <property type="entry name" value="UBA-like_sf"/>
</dbReference>
<dbReference type="PANTHER" id="PTHR12281:SF31">
    <property type="entry name" value="DCN1-LIKE PROTEIN 3"/>
    <property type="match status" value="1"/>
</dbReference>
<dbReference type="PANTHER" id="PTHR12281">
    <property type="entry name" value="RP42 RELATED"/>
    <property type="match status" value="1"/>
</dbReference>
<dbReference type="Pfam" id="PF03556">
    <property type="entry name" value="Cullin_binding"/>
    <property type="match status" value="1"/>
</dbReference>
<dbReference type="Pfam" id="PF14555">
    <property type="entry name" value="UBA_4"/>
    <property type="match status" value="1"/>
</dbReference>
<dbReference type="SUPFAM" id="SSF46934">
    <property type="entry name" value="UBA-like"/>
    <property type="match status" value="1"/>
</dbReference>
<dbReference type="PROSITE" id="PS51229">
    <property type="entry name" value="DCUN1"/>
    <property type="match status" value="1"/>
</dbReference>